<comment type="subcellular location">
    <subcellularLocation>
        <location evidence="1">Cytoplasm</location>
    </subcellularLocation>
</comment>
<comment type="induction">
    <text>By interferons.</text>
</comment>
<comment type="similarity">
    <text evidence="4">Belongs to the TRAFAC class dynamin-like GTPase superfamily. Dynamin/Fzo/YdjA family.</text>
</comment>
<evidence type="ECO:0000250" key="1"/>
<evidence type="ECO:0000255" key="2"/>
<evidence type="ECO:0000255" key="3">
    <source>
        <dbReference type="PROSITE-ProRule" id="PRU00720"/>
    </source>
</evidence>
<evidence type="ECO:0000255" key="4">
    <source>
        <dbReference type="PROSITE-ProRule" id="PRU01055"/>
    </source>
</evidence>
<evidence type="ECO:0000269" key="5">
    <source ref="1"/>
</evidence>
<feature type="chain" id="PRO_0000292871" description="Interferon-induced GTP-binding protein Mx">
    <location>
        <begin position="1"/>
        <end position="652"/>
    </location>
</feature>
<feature type="domain" description="Dynamin-type G" evidence="4">
    <location>
        <begin position="30"/>
        <end position="303"/>
    </location>
</feature>
<feature type="domain" description="GED" evidence="3">
    <location>
        <begin position="554"/>
        <end position="645"/>
    </location>
</feature>
<feature type="region of interest" description="G1 motif" evidence="4">
    <location>
        <begin position="40"/>
        <end position="47"/>
    </location>
</feature>
<feature type="region of interest" description="G2 motif" evidence="4">
    <location>
        <begin position="65"/>
        <end position="67"/>
    </location>
</feature>
<feature type="region of interest" description="G3 motif" evidence="4">
    <location>
        <begin position="141"/>
        <end position="144"/>
    </location>
</feature>
<feature type="region of interest" description="G4 motif" evidence="4">
    <location>
        <begin position="210"/>
        <end position="213"/>
    </location>
</feature>
<feature type="region of interest" description="G5 motif" evidence="4">
    <location>
        <begin position="242"/>
        <end position="245"/>
    </location>
</feature>
<feature type="binding site" evidence="2">
    <location>
        <begin position="40"/>
        <end position="47"/>
    </location>
    <ligand>
        <name>GTP</name>
        <dbReference type="ChEBI" id="CHEBI:37565"/>
    </ligand>
</feature>
<feature type="binding site" evidence="2">
    <location>
        <begin position="141"/>
        <end position="145"/>
    </location>
    <ligand>
        <name>GTP</name>
        <dbReference type="ChEBI" id="CHEBI:37565"/>
    </ligand>
</feature>
<feature type="binding site" evidence="2">
    <location>
        <begin position="210"/>
        <end position="213"/>
    </location>
    <ligand>
        <name>GTP</name>
        <dbReference type="ChEBI" id="CHEBI:37565"/>
    </ligand>
</feature>
<feature type="sequence variant" evidence="5">
    <original>M</original>
    <variation>V</variation>
    <location>
        <position position="239"/>
    </location>
</feature>
<feature type="sequence variant" evidence="5">
    <original>K</original>
    <variation>R</variation>
    <location>
        <position position="457"/>
    </location>
</feature>
<proteinExistence type="evidence at transcript level"/>
<name>MX_DICLA</name>
<organism>
    <name type="scientific">Dicentrarchus labrax</name>
    <name type="common">European seabass</name>
    <name type="synonym">Morone labrax</name>
    <dbReference type="NCBI Taxonomy" id="13489"/>
    <lineage>
        <taxon>Eukaryota</taxon>
        <taxon>Metazoa</taxon>
        <taxon>Chordata</taxon>
        <taxon>Craniata</taxon>
        <taxon>Vertebrata</taxon>
        <taxon>Euteleostomi</taxon>
        <taxon>Actinopterygii</taxon>
        <taxon>Neopterygii</taxon>
        <taxon>Teleostei</taxon>
        <taxon>Neoteleostei</taxon>
        <taxon>Acanthomorphata</taxon>
        <taxon>Eupercaria</taxon>
        <taxon>Moronidae</taxon>
        <taxon>Dicentrarchus</taxon>
    </lineage>
</organism>
<sequence length="652" mass="73824">MNALNQQYEEKVRPCIDLIDSLRSLGVEKDLALPAIAVIGDQSSGKSSVLEALSGVALPRGSGIVTRCPLELKMKRKNEGEEWYGKITYIGFEENIKDPADVEKKIREAQNKIAGPGSGISEDLISLEIASPDVPDLTLIDLPGIARVAVKGQPENIGDQIKRLIQKFITKQETISLVVVPCNVDIATTEALNMAQRVDPDGERTLGILTKPDLVDKGTEETVVDIVHNEVIHLKKGYMIVKCRGQKEITEKVSLTEAIEREKAFFNDHVFFHTLYNDGHATVPKLAEKLTLELVHHIEKSLPRLEEQIEKKLIETQVELNKYGNGPPPDTSERLGFLIDRVTAFTQDAISLTSGEELKSGVRLNIFSMLRKEFAAWKEMIERSGVTFNWNIEKEVAQYERKYRGRELPGFINYKTFEVMVPGFVNYKTFEGMVKEQIKQLEEPAVLKLKEVAEIVKKELFKVAQNSFVGFPNLMRAAKMMIEAIRKEKEIVAESMLRTQFKMESIVYTQDSTYSKKLGKRKREDLQDGVTGLGTQVKLNTSSTVGNNGTGATLKEMLKHLKSYYQIAGQRLADQIPLVIRYQMLQESAVQLQREMLQMLQDKEKNKVLLHEDSGITNKRIHLQKRLERLSKARLLLTDFSMNIYNFNTTQL</sequence>
<reference key="1">
    <citation type="submission" date="2007-01" db="EMBL/GenBank/DDBJ databases">
        <title>Cloning and expression of Mx protein from sea bass.</title>
        <authorList>
            <person name="Buonocore F."/>
            <person name="Randelli E."/>
            <person name="Scapigliati G."/>
        </authorList>
    </citation>
    <scope>NUCLEOTIDE SEQUENCE [MRNA]</scope>
    <scope>VARIANTS VAL-239 AND ARG-457</scope>
    <source>
        <strain>1</strain>
        <strain>2</strain>
        <tissue>Brain</tissue>
    </source>
</reference>
<keyword id="KW-0963">Cytoplasm</keyword>
<keyword id="KW-0342">GTP-binding</keyword>
<keyword id="KW-0547">Nucleotide-binding</keyword>
<keyword id="KW-1185">Reference proteome</keyword>
<dbReference type="EMBL" id="AM228974">
    <property type="protein sequence ID" value="CAJ76071.2"/>
    <property type="molecule type" value="mRNA"/>
</dbReference>
<dbReference type="EMBL" id="AM228975">
    <property type="protein sequence ID" value="CAJ76072.2"/>
    <property type="molecule type" value="mRNA"/>
</dbReference>
<dbReference type="EMBL" id="AM228976">
    <property type="protein sequence ID" value="CAJ76073.2"/>
    <property type="molecule type" value="mRNA"/>
</dbReference>
<dbReference type="EMBL" id="AM228977">
    <property type="protein sequence ID" value="CAJ76074.2"/>
    <property type="molecule type" value="mRNA"/>
</dbReference>
<dbReference type="SMR" id="Q2KTC2"/>
<dbReference type="Proteomes" id="UP000694389">
    <property type="component" value="Unplaced"/>
</dbReference>
<dbReference type="GO" id="GO:0005737">
    <property type="term" value="C:cytoplasm"/>
    <property type="evidence" value="ECO:0007669"/>
    <property type="project" value="UniProtKB-SubCell"/>
</dbReference>
<dbReference type="GO" id="GO:0005874">
    <property type="term" value="C:microtubule"/>
    <property type="evidence" value="ECO:0007669"/>
    <property type="project" value="TreeGrafter"/>
</dbReference>
<dbReference type="GO" id="GO:0005634">
    <property type="term" value="C:nucleus"/>
    <property type="evidence" value="ECO:0007669"/>
    <property type="project" value="TreeGrafter"/>
</dbReference>
<dbReference type="GO" id="GO:0005886">
    <property type="term" value="C:plasma membrane"/>
    <property type="evidence" value="ECO:0007669"/>
    <property type="project" value="TreeGrafter"/>
</dbReference>
<dbReference type="GO" id="GO:0098793">
    <property type="term" value="C:presynapse"/>
    <property type="evidence" value="ECO:0007669"/>
    <property type="project" value="GOC"/>
</dbReference>
<dbReference type="GO" id="GO:0005525">
    <property type="term" value="F:GTP binding"/>
    <property type="evidence" value="ECO:0007669"/>
    <property type="project" value="UniProtKB-KW"/>
</dbReference>
<dbReference type="GO" id="GO:0003924">
    <property type="term" value="F:GTPase activity"/>
    <property type="evidence" value="ECO:0007669"/>
    <property type="project" value="InterPro"/>
</dbReference>
<dbReference type="GO" id="GO:0008017">
    <property type="term" value="F:microtubule binding"/>
    <property type="evidence" value="ECO:0007669"/>
    <property type="project" value="TreeGrafter"/>
</dbReference>
<dbReference type="GO" id="GO:0051607">
    <property type="term" value="P:defense response to virus"/>
    <property type="evidence" value="ECO:0007669"/>
    <property type="project" value="TreeGrafter"/>
</dbReference>
<dbReference type="GO" id="GO:0031623">
    <property type="term" value="P:receptor internalization"/>
    <property type="evidence" value="ECO:0007669"/>
    <property type="project" value="TreeGrafter"/>
</dbReference>
<dbReference type="GO" id="GO:0016185">
    <property type="term" value="P:synaptic vesicle budding from presynaptic endocytic zone membrane"/>
    <property type="evidence" value="ECO:0007669"/>
    <property type="project" value="TreeGrafter"/>
</dbReference>
<dbReference type="CDD" id="cd08771">
    <property type="entry name" value="DLP_1"/>
    <property type="match status" value="1"/>
</dbReference>
<dbReference type="FunFam" id="1.20.120.1240:FF:000007">
    <property type="entry name" value="Interferon-induced GTP-binding protein Mx1"/>
    <property type="match status" value="1"/>
</dbReference>
<dbReference type="FunFam" id="3.40.50.300:FF:000621">
    <property type="entry name" value="Interferon-induced GTP-binding protein Mx1"/>
    <property type="match status" value="1"/>
</dbReference>
<dbReference type="Gene3D" id="1.20.120.1240">
    <property type="entry name" value="Dynamin, middle domain"/>
    <property type="match status" value="2"/>
</dbReference>
<dbReference type="Gene3D" id="3.40.50.300">
    <property type="entry name" value="P-loop containing nucleotide triphosphate hydrolases"/>
    <property type="match status" value="1"/>
</dbReference>
<dbReference type="InterPro" id="IPR022812">
    <property type="entry name" value="Dynamin"/>
</dbReference>
<dbReference type="InterPro" id="IPR001401">
    <property type="entry name" value="Dynamin_GTPase"/>
</dbReference>
<dbReference type="InterPro" id="IPR019762">
    <property type="entry name" value="Dynamin_GTPase_CS"/>
</dbReference>
<dbReference type="InterPro" id="IPR045063">
    <property type="entry name" value="Dynamin_N"/>
</dbReference>
<dbReference type="InterPro" id="IPR000375">
    <property type="entry name" value="Dynamin_stalk"/>
</dbReference>
<dbReference type="InterPro" id="IPR030381">
    <property type="entry name" value="G_DYNAMIN_dom"/>
</dbReference>
<dbReference type="InterPro" id="IPR003130">
    <property type="entry name" value="GED"/>
</dbReference>
<dbReference type="InterPro" id="IPR020850">
    <property type="entry name" value="GED_dom"/>
</dbReference>
<dbReference type="InterPro" id="IPR027417">
    <property type="entry name" value="P-loop_NTPase"/>
</dbReference>
<dbReference type="PANTHER" id="PTHR11566">
    <property type="entry name" value="DYNAMIN"/>
    <property type="match status" value="1"/>
</dbReference>
<dbReference type="PANTHER" id="PTHR11566:SF225">
    <property type="entry name" value="INTERFERON-INDUCED GTP-BINDING PROTEIN MX-RELATED"/>
    <property type="match status" value="1"/>
</dbReference>
<dbReference type="Pfam" id="PF01031">
    <property type="entry name" value="Dynamin_M"/>
    <property type="match status" value="2"/>
</dbReference>
<dbReference type="Pfam" id="PF00350">
    <property type="entry name" value="Dynamin_N"/>
    <property type="match status" value="1"/>
</dbReference>
<dbReference type="Pfam" id="PF02212">
    <property type="entry name" value="GED"/>
    <property type="match status" value="1"/>
</dbReference>
<dbReference type="PRINTS" id="PR00195">
    <property type="entry name" value="DYNAMIN"/>
</dbReference>
<dbReference type="SMART" id="SM00053">
    <property type="entry name" value="DYNc"/>
    <property type="match status" value="1"/>
</dbReference>
<dbReference type="SMART" id="SM00302">
    <property type="entry name" value="GED"/>
    <property type="match status" value="1"/>
</dbReference>
<dbReference type="SUPFAM" id="SSF52540">
    <property type="entry name" value="P-loop containing nucleoside triphosphate hydrolases"/>
    <property type="match status" value="1"/>
</dbReference>
<dbReference type="PROSITE" id="PS00410">
    <property type="entry name" value="G_DYNAMIN_1"/>
    <property type="match status" value="1"/>
</dbReference>
<dbReference type="PROSITE" id="PS51718">
    <property type="entry name" value="G_DYNAMIN_2"/>
    <property type="match status" value="1"/>
</dbReference>
<dbReference type="PROSITE" id="PS51388">
    <property type="entry name" value="GED"/>
    <property type="match status" value="1"/>
</dbReference>
<accession>Q2KTC2</accession>
<accession>Q2KTC3</accession>
<accession>Q2KTC4</accession>
<accession>Q2KTC5</accession>
<gene>
    <name type="primary">mx</name>
</gene>
<protein>
    <recommendedName>
        <fullName>Interferon-induced GTP-binding protein Mx</fullName>
    </recommendedName>
    <alternativeName>
        <fullName>Interferon-inducible Mx protein</fullName>
    </alternativeName>
</protein>